<accession>P96190</accession>
<feature type="chain" id="PRO_0000090323" description="Triosephosphate isomerase">
    <location>
        <begin position="1"/>
        <end position="249"/>
    </location>
</feature>
<feature type="active site" description="Electrophile" evidence="1">
    <location>
        <position position="96"/>
    </location>
</feature>
<feature type="active site" description="Proton acceptor" evidence="1">
    <location>
        <position position="166"/>
    </location>
</feature>
<feature type="binding site" evidence="1">
    <location>
        <begin position="12"/>
        <end position="14"/>
    </location>
    <ligand>
        <name>substrate</name>
    </ligand>
</feature>
<feature type="binding site" evidence="1">
    <location>
        <position position="172"/>
    </location>
    <ligand>
        <name>substrate</name>
    </ligand>
</feature>
<feature type="binding site" evidence="1">
    <location>
        <position position="211"/>
    </location>
    <ligand>
        <name>substrate</name>
    </ligand>
</feature>
<feature type="binding site" evidence="1">
    <location>
        <begin position="232"/>
        <end position="233"/>
    </location>
    <ligand>
        <name>substrate</name>
    </ligand>
</feature>
<sequence>MTAERRPLIAGNWKMNGLRAAKSELRTVAAGLAGLSAETMICPPFTLIGAFAADVAGTQLMIGGQDCHPAESGAHTGDISAEMLRDAGAVAVILGHSERRIDHQEGDAIVKAKVKAAWRAGLLPVVCVGETLVERDAGEAAAVVTRQVRQSVPEGATAVSLVIAYEPIWAIGTGRTPTTDDVAEVHGAIRHILAERFGAEANGIRILYGGSVKPDNAAALLATANVDGALVGGASLKAADFLAIARAVG</sequence>
<name>TPIS_XANFL</name>
<gene>
    <name evidence="1" type="primary">tpiA</name>
    <name type="synonym">tpi</name>
</gene>
<protein>
    <recommendedName>
        <fullName evidence="1">Triosephosphate isomerase</fullName>
        <shortName evidence="1">TIM</shortName>
        <shortName evidence="1">TPI</shortName>
        <ecNumber evidence="1">5.3.1.1</ecNumber>
    </recommendedName>
    <alternativeName>
        <fullName evidence="1">Triose-phosphate isomerase</fullName>
    </alternativeName>
</protein>
<organism>
    <name type="scientific">Xanthobacter flavus</name>
    <dbReference type="NCBI Taxonomy" id="281"/>
    <lineage>
        <taxon>Bacteria</taxon>
        <taxon>Pseudomonadati</taxon>
        <taxon>Pseudomonadota</taxon>
        <taxon>Alphaproteobacteria</taxon>
        <taxon>Hyphomicrobiales</taxon>
        <taxon>Xanthobacteraceae</taxon>
        <taxon>Xanthobacter</taxon>
    </lineage>
</organism>
<reference key="1">
    <citation type="journal article" date="1997" name="Microbiology">
        <title>Xanthobacter flavus employs a single triosephosphate isomerase for heterotrophic and autotrophic metabolism.</title>
        <authorList>
            <person name="Meijer W.G."/>
            <person name="de Boer P."/>
            <person name="van Keulen G."/>
        </authorList>
    </citation>
    <scope>NUCLEOTIDE SEQUENCE [GENOMIC DNA]</scope>
    <source>
        <strain>H4-14</strain>
    </source>
</reference>
<dbReference type="EC" id="5.3.1.1" evidence="1"/>
<dbReference type="EMBL" id="U77930">
    <property type="protein sequence ID" value="AAC45452.1"/>
    <property type="molecule type" value="Genomic_DNA"/>
</dbReference>
<dbReference type="SMR" id="P96190"/>
<dbReference type="UniPathway" id="UPA00109">
    <property type="reaction ID" value="UER00189"/>
</dbReference>
<dbReference type="UniPathway" id="UPA00138"/>
<dbReference type="GO" id="GO:0005829">
    <property type="term" value="C:cytosol"/>
    <property type="evidence" value="ECO:0007669"/>
    <property type="project" value="TreeGrafter"/>
</dbReference>
<dbReference type="GO" id="GO:0004807">
    <property type="term" value="F:triose-phosphate isomerase activity"/>
    <property type="evidence" value="ECO:0007669"/>
    <property type="project" value="UniProtKB-UniRule"/>
</dbReference>
<dbReference type="GO" id="GO:0006094">
    <property type="term" value="P:gluconeogenesis"/>
    <property type="evidence" value="ECO:0007669"/>
    <property type="project" value="UniProtKB-UniRule"/>
</dbReference>
<dbReference type="GO" id="GO:0046166">
    <property type="term" value="P:glyceraldehyde-3-phosphate biosynthetic process"/>
    <property type="evidence" value="ECO:0007669"/>
    <property type="project" value="TreeGrafter"/>
</dbReference>
<dbReference type="GO" id="GO:0019563">
    <property type="term" value="P:glycerol catabolic process"/>
    <property type="evidence" value="ECO:0007669"/>
    <property type="project" value="TreeGrafter"/>
</dbReference>
<dbReference type="GO" id="GO:0006096">
    <property type="term" value="P:glycolytic process"/>
    <property type="evidence" value="ECO:0007669"/>
    <property type="project" value="UniProtKB-UniRule"/>
</dbReference>
<dbReference type="CDD" id="cd00311">
    <property type="entry name" value="TIM"/>
    <property type="match status" value="1"/>
</dbReference>
<dbReference type="FunFam" id="3.20.20.70:FF:000016">
    <property type="entry name" value="Triosephosphate isomerase"/>
    <property type="match status" value="1"/>
</dbReference>
<dbReference type="Gene3D" id="3.20.20.70">
    <property type="entry name" value="Aldolase class I"/>
    <property type="match status" value="1"/>
</dbReference>
<dbReference type="HAMAP" id="MF_00147_B">
    <property type="entry name" value="TIM_B"/>
    <property type="match status" value="1"/>
</dbReference>
<dbReference type="InterPro" id="IPR013785">
    <property type="entry name" value="Aldolase_TIM"/>
</dbReference>
<dbReference type="InterPro" id="IPR035990">
    <property type="entry name" value="TIM_sf"/>
</dbReference>
<dbReference type="InterPro" id="IPR022896">
    <property type="entry name" value="TrioseP_Isoase_bac/euk"/>
</dbReference>
<dbReference type="InterPro" id="IPR000652">
    <property type="entry name" value="Triosephosphate_isomerase"/>
</dbReference>
<dbReference type="InterPro" id="IPR020861">
    <property type="entry name" value="Triosephosphate_isomerase_AS"/>
</dbReference>
<dbReference type="NCBIfam" id="TIGR00419">
    <property type="entry name" value="tim"/>
    <property type="match status" value="1"/>
</dbReference>
<dbReference type="PANTHER" id="PTHR21139">
    <property type="entry name" value="TRIOSEPHOSPHATE ISOMERASE"/>
    <property type="match status" value="1"/>
</dbReference>
<dbReference type="PANTHER" id="PTHR21139:SF42">
    <property type="entry name" value="TRIOSEPHOSPHATE ISOMERASE"/>
    <property type="match status" value="1"/>
</dbReference>
<dbReference type="Pfam" id="PF00121">
    <property type="entry name" value="TIM"/>
    <property type="match status" value="1"/>
</dbReference>
<dbReference type="SUPFAM" id="SSF51351">
    <property type="entry name" value="Triosephosphate isomerase (TIM)"/>
    <property type="match status" value="1"/>
</dbReference>
<dbReference type="PROSITE" id="PS00171">
    <property type="entry name" value="TIM_1"/>
    <property type="match status" value="1"/>
</dbReference>
<dbReference type="PROSITE" id="PS51440">
    <property type="entry name" value="TIM_2"/>
    <property type="match status" value="1"/>
</dbReference>
<evidence type="ECO:0000255" key="1">
    <source>
        <dbReference type="HAMAP-Rule" id="MF_00147"/>
    </source>
</evidence>
<keyword id="KW-0963">Cytoplasm</keyword>
<keyword id="KW-0312">Gluconeogenesis</keyword>
<keyword id="KW-0324">Glycolysis</keyword>
<keyword id="KW-0413">Isomerase</keyword>
<comment type="function">
    <text evidence="1">Involved in the gluconeogenesis. Catalyzes stereospecifically the conversion of dihydroxyacetone phosphate (DHAP) to D-glyceraldehyde-3-phosphate (G3P).</text>
</comment>
<comment type="catalytic activity">
    <reaction evidence="1">
        <text>D-glyceraldehyde 3-phosphate = dihydroxyacetone phosphate</text>
        <dbReference type="Rhea" id="RHEA:18585"/>
        <dbReference type="ChEBI" id="CHEBI:57642"/>
        <dbReference type="ChEBI" id="CHEBI:59776"/>
        <dbReference type="EC" id="5.3.1.1"/>
    </reaction>
</comment>
<comment type="pathway">
    <text evidence="1">Carbohydrate biosynthesis; gluconeogenesis.</text>
</comment>
<comment type="pathway">
    <text evidence="1">Carbohydrate degradation; glycolysis; D-glyceraldehyde 3-phosphate from glycerone phosphate: step 1/1.</text>
</comment>
<comment type="subunit">
    <text evidence="1">Homodimer.</text>
</comment>
<comment type="subcellular location">
    <subcellularLocation>
        <location evidence="1">Cytoplasm</location>
    </subcellularLocation>
</comment>
<comment type="similarity">
    <text evidence="1">Belongs to the triosephosphate isomerase family.</text>
</comment>
<proteinExistence type="inferred from homology"/>